<reference key="1">
    <citation type="journal article" date="2011" name="J. Bacteriol.">
        <title>Comparative genomics of 28 Salmonella enterica isolates: evidence for CRISPR-mediated adaptive sublineage evolution.</title>
        <authorList>
            <person name="Fricke W.F."/>
            <person name="Mammel M.K."/>
            <person name="McDermott P.F."/>
            <person name="Tartera C."/>
            <person name="White D.G."/>
            <person name="Leclerc J.E."/>
            <person name="Ravel J."/>
            <person name="Cebula T.A."/>
        </authorList>
    </citation>
    <scope>NUCLEOTIDE SEQUENCE [LARGE SCALE GENOMIC DNA]</scope>
    <source>
        <strain>CT_02021853</strain>
    </source>
</reference>
<evidence type="ECO:0000255" key="1">
    <source>
        <dbReference type="HAMAP-Rule" id="MF_00394"/>
    </source>
</evidence>
<name>GPDA_SALDC</name>
<accession>B5FLH8</accession>
<keyword id="KW-0963">Cytoplasm</keyword>
<keyword id="KW-0444">Lipid biosynthesis</keyword>
<keyword id="KW-0443">Lipid metabolism</keyword>
<keyword id="KW-0520">NAD</keyword>
<keyword id="KW-0521">NADP</keyword>
<keyword id="KW-0547">Nucleotide-binding</keyword>
<keyword id="KW-0560">Oxidoreductase</keyword>
<keyword id="KW-0594">Phospholipid biosynthesis</keyword>
<keyword id="KW-1208">Phospholipid metabolism</keyword>
<gene>
    <name evidence="1" type="primary">gpsA</name>
    <name type="ordered locus">SeD_A4086</name>
</gene>
<proteinExistence type="inferred from homology"/>
<feature type="chain" id="PRO_1000123181" description="Glycerol-3-phosphate dehydrogenase [NAD(P)+]">
    <location>
        <begin position="1"/>
        <end position="339"/>
    </location>
</feature>
<feature type="active site" description="Proton acceptor" evidence="1">
    <location>
        <position position="195"/>
    </location>
</feature>
<feature type="binding site" evidence="1">
    <location>
        <position position="15"/>
    </location>
    <ligand>
        <name>NADPH</name>
        <dbReference type="ChEBI" id="CHEBI:57783"/>
    </ligand>
</feature>
<feature type="binding site" evidence="1">
    <location>
        <position position="16"/>
    </location>
    <ligand>
        <name>NADPH</name>
        <dbReference type="ChEBI" id="CHEBI:57783"/>
    </ligand>
</feature>
<feature type="binding site" evidence="1">
    <location>
        <position position="36"/>
    </location>
    <ligand>
        <name>NADPH</name>
        <dbReference type="ChEBI" id="CHEBI:57783"/>
    </ligand>
</feature>
<feature type="binding site" evidence="1">
    <location>
        <position position="110"/>
    </location>
    <ligand>
        <name>NADPH</name>
        <dbReference type="ChEBI" id="CHEBI:57783"/>
    </ligand>
</feature>
<feature type="binding site" evidence="1">
    <location>
        <position position="110"/>
    </location>
    <ligand>
        <name>sn-glycerol 3-phosphate</name>
        <dbReference type="ChEBI" id="CHEBI:57597"/>
    </ligand>
</feature>
<feature type="binding site" evidence="1">
    <location>
        <position position="139"/>
    </location>
    <ligand>
        <name>sn-glycerol 3-phosphate</name>
        <dbReference type="ChEBI" id="CHEBI:57597"/>
    </ligand>
</feature>
<feature type="binding site" evidence="1">
    <location>
        <position position="141"/>
    </location>
    <ligand>
        <name>sn-glycerol 3-phosphate</name>
        <dbReference type="ChEBI" id="CHEBI:57597"/>
    </ligand>
</feature>
<feature type="binding site" evidence="1">
    <location>
        <position position="143"/>
    </location>
    <ligand>
        <name>NADPH</name>
        <dbReference type="ChEBI" id="CHEBI:57783"/>
    </ligand>
</feature>
<feature type="binding site" evidence="1">
    <location>
        <position position="195"/>
    </location>
    <ligand>
        <name>sn-glycerol 3-phosphate</name>
        <dbReference type="ChEBI" id="CHEBI:57597"/>
    </ligand>
</feature>
<feature type="binding site" evidence="1">
    <location>
        <position position="248"/>
    </location>
    <ligand>
        <name>sn-glycerol 3-phosphate</name>
        <dbReference type="ChEBI" id="CHEBI:57597"/>
    </ligand>
</feature>
<feature type="binding site" evidence="1">
    <location>
        <position position="258"/>
    </location>
    <ligand>
        <name>sn-glycerol 3-phosphate</name>
        <dbReference type="ChEBI" id="CHEBI:57597"/>
    </ligand>
</feature>
<feature type="binding site" evidence="1">
    <location>
        <position position="259"/>
    </location>
    <ligand>
        <name>NADPH</name>
        <dbReference type="ChEBI" id="CHEBI:57783"/>
    </ligand>
</feature>
<feature type="binding site" evidence="1">
    <location>
        <position position="259"/>
    </location>
    <ligand>
        <name>sn-glycerol 3-phosphate</name>
        <dbReference type="ChEBI" id="CHEBI:57597"/>
    </ligand>
</feature>
<feature type="binding site" evidence="1">
    <location>
        <position position="260"/>
    </location>
    <ligand>
        <name>sn-glycerol 3-phosphate</name>
        <dbReference type="ChEBI" id="CHEBI:57597"/>
    </ligand>
</feature>
<feature type="binding site" evidence="1">
    <location>
        <position position="283"/>
    </location>
    <ligand>
        <name>NADPH</name>
        <dbReference type="ChEBI" id="CHEBI:57783"/>
    </ligand>
</feature>
<feature type="binding site" evidence="1">
    <location>
        <position position="285"/>
    </location>
    <ligand>
        <name>NADPH</name>
        <dbReference type="ChEBI" id="CHEBI:57783"/>
    </ligand>
</feature>
<protein>
    <recommendedName>
        <fullName evidence="1">Glycerol-3-phosphate dehydrogenase [NAD(P)+]</fullName>
        <ecNumber evidence="1">1.1.1.94</ecNumber>
    </recommendedName>
    <alternativeName>
        <fullName evidence="1">NAD(P)(+)-dependent glycerol-3-phosphate dehydrogenase</fullName>
    </alternativeName>
    <alternativeName>
        <fullName evidence="1">NAD(P)H-dependent dihydroxyacetone-phosphate reductase</fullName>
    </alternativeName>
</protein>
<organism>
    <name type="scientific">Salmonella dublin (strain CT_02021853)</name>
    <dbReference type="NCBI Taxonomy" id="439851"/>
    <lineage>
        <taxon>Bacteria</taxon>
        <taxon>Pseudomonadati</taxon>
        <taxon>Pseudomonadota</taxon>
        <taxon>Gammaproteobacteria</taxon>
        <taxon>Enterobacterales</taxon>
        <taxon>Enterobacteriaceae</taxon>
        <taxon>Salmonella</taxon>
    </lineage>
</organism>
<sequence length="339" mass="36343">MNQSNASMTVIGAGSYGTALAITLARNGHQVVLWGHDPKHIATLEHDRCNVAFLPDVPFPDTLHLESDLATALAASRNILVVVPSHVFSDVLRQIKPLMRPDARLVWATKGLEAETGRLLQDVAREALGDQIPLAVISGPTFAKELAAGLPTAISLASTDETFADDLQQLLHCGKSFRVYINADFIGVQLGGAVKNVIAIGAGMSDGIGFGANARTALITRGLTEMSRLGAALGADPATFMGMAGLGDLVLTCTDNQSRNRRFGMMLGQGMDVKGAQDKIGQVVEGYRNTKEVRELAHRFGVEMPITEEIYQVLYCGKNAREAALTLLGRARKEELSRH</sequence>
<dbReference type="EC" id="1.1.1.94" evidence="1"/>
<dbReference type="EMBL" id="CP001144">
    <property type="protein sequence ID" value="ACH77519.1"/>
    <property type="molecule type" value="Genomic_DNA"/>
</dbReference>
<dbReference type="RefSeq" id="WP_001076596.1">
    <property type="nucleotide sequence ID" value="NC_011205.1"/>
</dbReference>
<dbReference type="SMR" id="B5FLH8"/>
<dbReference type="KEGG" id="sed:SeD_A4086"/>
<dbReference type="HOGENOM" id="CLU_033449_0_2_6"/>
<dbReference type="UniPathway" id="UPA00940"/>
<dbReference type="Proteomes" id="UP000008322">
    <property type="component" value="Chromosome"/>
</dbReference>
<dbReference type="GO" id="GO:0005829">
    <property type="term" value="C:cytosol"/>
    <property type="evidence" value="ECO:0007669"/>
    <property type="project" value="TreeGrafter"/>
</dbReference>
<dbReference type="GO" id="GO:0047952">
    <property type="term" value="F:glycerol-3-phosphate dehydrogenase [NAD(P)+] activity"/>
    <property type="evidence" value="ECO:0007669"/>
    <property type="project" value="UniProtKB-UniRule"/>
</dbReference>
<dbReference type="GO" id="GO:0051287">
    <property type="term" value="F:NAD binding"/>
    <property type="evidence" value="ECO:0007669"/>
    <property type="project" value="InterPro"/>
</dbReference>
<dbReference type="GO" id="GO:0005975">
    <property type="term" value="P:carbohydrate metabolic process"/>
    <property type="evidence" value="ECO:0007669"/>
    <property type="project" value="InterPro"/>
</dbReference>
<dbReference type="GO" id="GO:0046167">
    <property type="term" value="P:glycerol-3-phosphate biosynthetic process"/>
    <property type="evidence" value="ECO:0007669"/>
    <property type="project" value="UniProtKB-UniRule"/>
</dbReference>
<dbReference type="GO" id="GO:0046168">
    <property type="term" value="P:glycerol-3-phosphate catabolic process"/>
    <property type="evidence" value="ECO:0007669"/>
    <property type="project" value="InterPro"/>
</dbReference>
<dbReference type="GO" id="GO:0046474">
    <property type="term" value="P:glycerophospholipid biosynthetic process"/>
    <property type="evidence" value="ECO:0007669"/>
    <property type="project" value="TreeGrafter"/>
</dbReference>
<dbReference type="FunFam" id="1.10.1040.10:FF:000001">
    <property type="entry name" value="Glycerol-3-phosphate dehydrogenase [NAD(P)+]"/>
    <property type="match status" value="1"/>
</dbReference>
<dbReference type="FunFam" id="3.40.50.720:FF:000019">
    <property type="entry name" value="Glycerol-3-phosphate dehydrogenase [NAD(P)+]"/>
    <property type="match status" value="1"/>
</dbReference>
<dbReference type="Gene3D" id="1.10.1040.10">
    <property type="entry name" value="N-(1-d-carboxylethyl)-l-norvaline Dehydrogenase, domain 2"/>
    <property type="match status" value="1"/>
</dbReference>
<dbReference type="Gene3D" id="3.40.50.720">
    <property type="entry name" value="NAD(P)-binding Rossmann-like Domain"/>
    <property type="match status" value="1"/>
</dbReference>
<dbReference type="HAMAP" id="MF_00394">
    <property type="entry name" value="NAD_Glyc3P_dehydrog"/>
    <property type="match status" value="1"/>
</dbReference>
<dbReference type="InterPro" id="IPR008927">
    <property type="entry name" value="6-PGluconate_DH-like_C_sf"/>
</dbReference>
<dbReference type="InterPro" id="IPR013328">
    <property type="entry name" value="6PGD_dom2"/>
</dbReference>
<dbReference type="InterPro" id="IPR006168">
    <property type="entry name" value="G3P_DH_NAD-dep"/>
</dbReference>
<dbReference type="InterPro" id="IPR006109">
    <property type="entry name" value="G3P_DH_NAD-dep_C"/>
</dbReference>
<dbReference type="InterPro" id="IPR011128">
    <property type="entry name" value="G3P_DH_NAD-dep_N"/>
</dbReference>
<dbReference type="InterPro" id="IPR036291">
    <property type="entry name" value="NAD(P)-bd_dom_sf"/>
</dbReference>
<dbReference type="NCBIfam" id="NF000939">
    <property type="entry name" value="PRK00094.1-1"/>
    <property type="match status" value="1"/>
</dbReference>
<dbReference type="NCBIfam" id="NF000940">
    <property type="entry name" value="PRK00094.1-2"/>
    <property type="match status" value="1"/>
</dbReference>
<dbReference type="NCBIfam" id="NF000942">
    <property type="entry name" value="PRK00094.1-4"/>
    <property type="match status" value="1"/>
</dbReference>
<dbReference type="PANTHER" id="PTHR11728">
    <property type="entry name" value="GLYCEROL-3-PHOSPHATE DEHYDROGENASE"/>
    <property type="match status" value="1"/>
</dbReference>
<dbReference type="PANTHER" id="PTHR11728:SF1">
    <property type="entry name" value="GLYCEROL-3-PHOSPHATE DEHYDROGENASE [NAD(+)] 2, CHLOROPLASTIC"/>
    <property type="match status" value="1"/>
</dbReference>
<dbReference type="Pfam" id="PF07479">
    <property type="entry name" value="NAD_Gly3P_dh_C"/>
    <property type="match status" value="1"/>
</dbReference>
<dbReference type="Pfam" id="PF01210">
    <property type="entry name" value="NAD_Gly3P_dh_N"/>
    <property type="match status" value="1"/>
</dbReference>
<dbReference type="PIRSF" id="PIRSF000114">
    <property type="entry name" value="Glycerol-3-P_dh"/>
    <property type="match status" value="1"/>
</dbReference>
<dbReference type="PRINTS" id="PR00077">
    <property type="entry name" value="GPDHDRGNASE"/>
</dbReference>
<dbReference type="SUPFAM" id="SSF48179">
    <property type="entry name" value="6-phosphogluconate dehydrogenase C-terminal domain-like"/>
    <property type="match status" value="1"/>
</dbReference>
<dbReference type="SUPFAM" id="SSF51735">
    <property type="entry name" value="NAD(P)-binding Rossmann-fold domains"/>
    <property type="match status" value="1"/>
</dbReference>
<dbReference type="PROSITE" id="PS00957">
    <property type="entry name" value="NAD_G3PDH"/>
    <property type="match status" value="1"/>
</dbReference>
<comment type="function">
    <text evidence="1">Catalyzes the reduction of the glycolytic intermediate dihydroxyacetone phosphate (DHAP) to sn-glycerol 3-phosphate (G3P), the key precursor for phospholipid synthesis.</text>
</comment>
<comment type="catalytic activity">
    <reaction evidence="1">
        <text>sn-glycerol 3-phosphate + NAD(+) = dihydroxyacetone phosphate + NADH + H(+)</text>
        <dbReference type="Rhea" id="RHEA:11092"/>
        <dbReference type="ChEBI" id="CHEBI:15378"/>
        <dbReference type="ChEBI" id="CHEBI:57540"/>
        <dbReference type="ChEBI" id="CHEBI:57597"/>
        <dbReference type="ChEBI" id="CHEBI:57642"/>
        <dbReference type="ChEBI" id="CHEBI:57945"/>
        <dbReference type="EC" id="1.1.1.94"/>
    </reaction>
    <physiologicalReaction direction="right-to-left" evidence="1">
        <dbReference type="Rhea" id="RHEA:11094"/>
    </physiologicalReaction>
</comment>
<comment type="catalytic activity">
    <reaction evidence="1">
        <text>sn-glycerol 3-phosphate + NADP(+) = dihydroxyacetone phosphate + NADPH + H(+)</text>
        <dbReference type="Rhea" id="RHEA:11096"/>
        <dbReference type="ChEBI" id="CHEBI:15378"/>
        <dbReference type="ChEBI" id="CHEBI:57597"/>
        <dbReference type="ChEBI" id="CHEBI:57642"/>
        <dbReference type="ChEBI" id="CHEBI:57783"/>
        <dbReference type="ChEBI" id="CHEBI:58349"/>
        <dbReference type="EC" id="1.1.1.94"/>
    </reaction>
    <physiologicalReaction direction="right-to-left" evidence="1">
        <dbReference type="Rhea" id="RHEA:11098"/>
    </physiologicalReaction>
</comment>
<comment type="pathway">
    <text evidence="1">Membrane lipid metabolism; glycerophospholipid metabolism.</text>
</comment>
<comment type="subcellular location">
    <subcellularLocation>
        <location evidence="1">Cytoplasm</location>
    </subcellularLocation>
</comment>
<comment type="similarity">
    <text evidence="1">Belongs to the NAD-dependent glycerol-3-phosphate dehydrogenase family.</text>
</comment>